<evidence type="ECO:0000255" key="1">
    <source>
        <dbReference type="HAMAP-Rule" id="MF_00185"/>
    </source>
</evidence>
<organism>
    <name type="scientific">Allorhizobium ampelinum (strain ATCC BAA-846 / DSM 112012 / S4)</name>
    <name type="common">Agrobacterium vitis (strain S4)</name>
    <dbReference type="NCBI Taxonomy" id="311402"/>
    <lineage>
        <taxon>Bacteria</taxon>
        <taxon>Pseudomonadati</taxon>
        <taxon>Pseudomonadota</taxon>
        <taxon>Alphaproteobacteria</taxon>
        <taxon>Hyphomicrobiales</taxon>
        <taxon>Rhizobiaceae</taxon>
        <taxon>Rhizobium/Agrobacterium group</taxon>
        <taxon>Allorhizobium</taxon>
        <taxon>Allorhizobium ampelinum</taxon>
    </lineage>
</organism>
<feature type="chain" id="PRO_0000377055" description="tRNA dimethylallyltransferase">
    <location>
        <begin position="1"/>
        <end position="304"/>
    </location>
</feature>
<feature type="region of interest" description="Interaction with substrate tRNA" evidence="1">
    <location>
        <begin position="41"/>
        <end position="44"/>
    </location>
</feature>
<feature type="region of interest" description="Interaction with substrate tRNA" evidence="1">
    <location>
        <begin position="165"/>
        <end position="169"/>
    </location>
</feature>
<feature type="binding site" evidence="1">
    <location>
        <begin position="16"/>
        <end position="23"/>
    </location>
    <ligand>
        <name>ATP</name>
        <dbReference type="ChEBI" id="CHEBI:30616"/>
    </ligand>
</feature>
<feature type="binding site" evidence="1">
    <location>
        <begin position="18"/>
        <end position="23"/>
    </location>
    <ligand>
        <name>substrate</name>
    </ligand>
</feature>
<feature type="site" description="Interaction with substrate tRNA" evidence="1">
    <location>
        <position position="107"/>
    </location>
</feature>
<feature type="site" description="Interaction with substrate tRNA" evidence="1">
    <location>
        <position position="129"/>
    </location>
</feature>
<comment type="function">
    <text evidence="1">Catalyzes the transfer of a dimethylallyl group onto the adenine at position 37 in tRNAs that read codons beginning with uridine, leading to the formation of N6-(dimethylallyl)adenosine (i(6)A).</text>
</comment>
<comment type="catalytic activity">
    <reaction evidence="1">
        <text>adenosine(37) in tRNA + dimethylallyl diphosphate = N(6)-dimethylallyladenosine(37) in tRNA + diphosphate</text>
        <dbReference type="Rhea" id="RHEA:26482"/>
        <dbReference type="Rhea" id="RHEA-COMP:10162"/>
        <dbReference type="Rhea" id="RHEA-COMP:10375"/>
        <dbReference type="ChEBI" id="CHEBI:33019"/>
        <dbReference type="ChEBI" id="CHEBI:57623"/>
        <dbReference type="ChEBI" id="CHEBI:74411"/>
        <dbReference type="ChEBI" id="CHEBI:74415"/>
        <dbReference type="EC" id="2.5.1.75"/>
    </reaction>
</comment>
<comment type="cofactor">
    <cofactor evidence="1">
        <name>Mg(2+)</name>
        <dbReference type="ChEBI" id="CHEBI:18420"/>
    </cofactor>
</comment>
<comment type="subunit">
    <text evidence="1">Monomer.</text>
</comment>
<comment type="similarity">
    <text evidence="1">Belongs to the IPP transferase family.</text>
</comment>
<sequence length="304" mass="33567">MMNNLDDNFDAILITGPTASGKSALALRLAAEVGGVVINADSMQVYDTLRVVTARPSEEDMQAVPHHLYGHVVAGAAYSTGDWLRDVAVLLQDLQAQNRLPVIVGGTGLYFKALTGGLSDMPAIPEAVRVMLRQRERVEGAESLHRDLTLRDPTVAARLDPRDGQRIIRALEVLEVTGQSISVFQTRSGPMIIDPQRARKLVVLPDRKLLHDRINRRFAMMMDEGAVEEVEALLAQNLSLDMPAMKAIGVSQIAAMLKGEISREDVIEKSSAATRQYAKRQMTWFRNQMNETWERVDPAANRSG</sequence>
<gene>
    <name evidence="1" type="primary">miaA</name>
    <name type="ordered locus">Avi_2808</name>
</gene>
<accession>B9JXP7</accession>
<proteinExistence type="inferred from homology"/>
<protein>
    <recommendedName>
        <fullName evidence="1">tRNA dimethylallyltransferase</fullName>
        <ecNumber evidence="1">2.5.1.75</ecNumber>
    </recommendedName>
    <alternativeName>
        <fullName evidence="1">Dimethylallyl diphosphate:tRNA dimethylallyltransferase</fullName>
        <shortName evidence="1">DMAPP:tRNA dimethylallyltransferase</shortName>
        <shortName evidence="1">DMATase</shortName>
    </alternativeName>
    <alternativeName>
        <fullName evidence="1">Isopentenyl-diphosphate:tRNA isopentenyltransferase</fullName>
        <shortName evidence="1">IPP transferase</shortName>
        <shortName evidence="1">IPPT</shortName>
        <shortName evidence="1">IPTase</shortName>
    </alternativeName>
</protein>
<reference key="1">
    <citation type="journal article" date="2009" name="J. Bacteriol.">
        <title>Genome sequences of three Agrobacterium biovars help elucidate the evolution of multichromosome genomes in bacteria.</title>
        <authorList>
            <person name="Slater S.C."/>
            <person name="Goldman B.S."/>
            <person name="Goodner B."/>
            <person name="Setubal J.C."/>
            <person name="Farrand S.K."/>
            <person name="Nester E.W."/>
            <person name="Burr T.J."/>
            <person name="Banta L."/>
            <person name="Dickerman A.W."/>
            <person name="Paulsen I."/>
            <person name="Otten L."/>
            <person name="Suen G."/>
            <person name="Welch R."/>
            <person name="Almeida N.F."/>
            <person name="Arnold F."/>
            <person name="Burton O.T."/>
            <person name="Du Z."/>
            <person name="Ewing A."/>
            <person name="Godsy E."/>
            <person name="Heisel S."/>
            <person name="Houmiel K.L."/>
            <person name="Jhaveri J."/>
            <person name="Lu J."/>
            <person name="Miller N.M."/>
            <person name="Norton S."/>
            <person name="Chen Q."/>
            <person name="Phoolcharoen W."/>
            <person name="Ohlin V."/>
            <person name="Ondrusek D."/>
            <person name="Pride N."/>
            <person name="Stricklin S.L."/>
            <person name="Sun J."/>
            <person name="Wheeler C."/>
            <person name="Wilson L."/>
            <person name="Zhu H."/>
            <person name="Wood D.W."/>
        </authorList>
    </citation>
    <scope>NUCLEOTIDE SEQUENCE [LARGE SCALE GENOMIC DNA]</scope>
    <source>
        <strain>ATCC BAA-846 / DSM 112012 / S4</strain>
    </source>
</reference>
<name>MIAA_ALLAM</name>
<keyword id="KW-0067">ATP-binding</keyword>
<keyword id="KW-0460">Magnesium</keyword>
<keyword id="KW-0547">Nucleotide-binding</keyword>
<keyword id="KW-1185">Reference proteome</keyword>
<keyword id="KW-0808">Transferase</keyword>
<keyword id="KW-0819">tRNA processing</keyword>
<dbReference type="EC" id="2.5.1.75" evidence="1"/>
<dbReference type="EMBL" id="CP000633">
    <property type="protein sequence ID" value="ACM37024.1"/>
    <property type="molecule type" value="Genomic_DNA"/>
</dbReference>
<dbReference type="RefSeq" id="WP_015916445.1">
    <property type="nucleotide sequence ID" value="NC_011989.1"/>
</dbReference>
<dbReference type="SMR" id="B9JXP7"/>
<dbReference type="STRING" id="311402.Avi_2808"/>
<dbReference type="KEGG" id="avi:Avi_2808"/>
<dbReference type="eggNOG" id="COG0324">
    <property type="taxonomic scope" value="Bacteria"/>
</dbReference>
<dbReference type="HOGENOM" id="CLU_032616_0_1_5"/>
<dbReference type="Proteomes" id="UP000001596">
    <property type="component" value="Chromosome 1"/>
</dbReference>
<dbReference type="GO" id="GO:0005524">
    <property type="term" value="F:ATP binding"/>
    <property type="evidence" value="ECO:0007669"/>
    <property type="project" value="UniProtKB-UniRule"/>
</dbReference>
<dbReference type="GO" id="GO:0052381">
    <property type="term" value="F:tRNA dimethylallyltransferase activity"/>
    <property type="evidence" value="ECO:0007669"/>
    <property type="project" value="UniProtKB-UniRule"/>
</dbReference>
<dbReference type="GO" id="GO:0006400">
    <property type="term" value="P:tRNA modification"/>
    <property type="evidence" value="ECO:0007669"/>
    <property type="project" value="TreeGrafter"/>
</dbReference>
<dbReference type="Gene3D" id="1.10.20.140">
    <property type="match status" value="1"/>
</dbReference>
<dbReference type="Gene3D" id="3.40.50.300">
    <property type="entry name" value="P-loop containing nucleotide triphosphate hydrolases"/>
    <property type="match status" value="1"/>
</dbReference>
<dbReference type="HAMAP" id="MF_00185">
    <property type="entry name" value="IPP_trans"/>
    <property type="match status" value="1"/>
</dbReference>
<dbReference type="InterPro" id="IPR039657">
    <property type="entry name" value="Dimethylallyltransferase"/>
</dbReference>
<dbReference type="InterPro" id="IPR018022">
    <property type="entry name" value="IPT"/>
</dbReference>
<dbReference type="InterPro" id="IPR027417">
    <property type="entry name" value="P-loop_NTPase"/>
</dbReference>
<dbReference type="NCBIfam" id="TIGR00174">
    <property type="entry name" value="miaA"/>
    <property type="match status" value="1"/>
</dbReference>
<dbReference type="PANTHER" id="PTHR11088">
    <property type="entry name" value="TRNA DIMETHYLALLYLTRANSFERASE"/>
    <property type="match status" value="1"/>
</dbReference>
<dbReference type="PANTHER" id="PTHR11088:SF60">
    <property type="entry name" value="TRNA DIMETHYLALLYLTRANSFERASE"/>
    <property type="match status" value="1"/>
</dbReference>
<dbReference type="Pfam" id="PF01715">
    <property type="entry name" value="IPPT"/>
    <property type="match status" value="1"/>
</dbReference>
<dbReference type="SUPFAM" id="SSF52540">
    <property type="entry name" value="P-loop containing nucleoside triphosphate hydrolases"/>
    <property type="match status" value="2"/>
</dbReference>